<feature type="chain" id="PRO_1000086027" description="Small ribosomal subunit protein uS5">
    <location>
        <begin position="1"/>
        <end position="220"/>
    </location>
</feature>
<feature type="domain" description="S5 DRBM" evidence="1">
    <location>
        <begin position="42"/>
        <end position="105"/>
    </location>
</feature>
<feature type="region of interest" description="Disordered" evidence="2">
    <location>
        <begin position="1"/>
        <end position="39"/>
    </location>
</feature>
<feature type="compositionally biased region" description="Basic and acidic residues" evidence="2">
    <location>
        <begin position="13"/>
        <end position="39"/>
    </location>
</feature>
<dbReference type="EMBL" id="AM408590">
    <property type="protein sequence ID" value="CAL70757.1"/>
    <property type="molecule type" value="Genomic_DNA"/>
</dbReference>
<dbReference type="RefSeq" id="WP_003403680.1">
    <property type="nucleotide sequence ID" value="NC_008769.1"/>
</dbReference>
<dbReference type="SMR" id="A1KGK2"/>
<dbReference type="GeneID" id="45424686"/>
<dbReference type="KEGG" id="mbb:BCG_0771"/>
<dbReference type="HOGENOM" id="CLU_065898_1_1_11"/>
<dbReference type="Proteomes" id="UP000001472">
    <property type="component" value="Chromosome"/>
</dbReference>
<dbReference type="GO" id="GO:0015935">
    <property type="term" value="C:small ribosomal subunit"/>
    <property type="evidence" value="ECO:0007669"/>
    <property type="project" value="InterPro"/>
</dbReference>
<dbReference type="GO" id="GO:0019843">
    <property type="term" value="F:rRNA binding"/>
    <property type="evidence" value="ECO:0007669"/>
    <property type="project" value="UniProtKB-UniRule"/>
</dbReference>
<dbReference type="GO" id="GO:0003735">
    <property type="term" value="F:structural constituent of ribosome"/>
    <property type="evidence" value="ECO:0007669"/>
    <property type="project" value="InterPro"/>
</dbReference>
<dbReference type="GO" id="GO:0006412">
    <property type="term" value="P:translation"/>
    <property type="evidence" value="ECO:0007669"/>
    <property type="project" value="UniProtKB-UniRule"/>
</dbReference>
<dbReference type="FunFam" id="3.30.160.20:FF:000001">
    <property type="entry name" value="30S ribosomal protein S5"/>
    <property type="match status" value="1"/>
</dbReference>
<dbReference type="FunFam" id="3.30.230.10:FF:000002">
    <property type="entry name" value="30S ribosomal protein S5"/>
    <property type="match status" value="1"/>
</dbReference>
<dbReference type="Gene3D" id="3.30.160.20">
    <property type="match status" value="1"/>
</dbReference>
<dbReference type="Gene3D" id="3.30.230.10">
    <property type="match status" value="1"/>
</dbReference>
<dbReference type="HAMAP" id="MF_01307_B">
    <property type="entry name" value="Ribosomal_uS5_B"/>
    <property type="match status" value="1"/>
</dbReference>
<dbReference type="InterPro" id="IPR020568">
    <property type="entry name" value="Ribosomal_Su5_D2-typ_SF"/>
</dbReference>
<dbReference type="InterPro" id="IPR000851">
    <property type="entry name" value="Ribosomal_uS5"/>
</dbReference>
<dbReference type="InterPro" id="IPR005712">
    <property type="entry name" value="Ribosomal_uS5_bac-type"/>
</dbReference>
<dbReference type="InterPro" id="IPR005324">
    <property type="entry name" value="Ribosomal_uS5_C"/>
</dbReference>
<dbReference type="InterPro" id="IPR013810">
    <property type="entry name" value="Ribosomal_uS5_N"/>
</dbReference>
<dbReference type="InterPro" id="IPR018192">
    <property type="entry name" value="Ribosomal_uS5_N_CS"/>
</dbReference>
<dbReference type="InterPro" id="IPR014721">
    <property type="entry name" value="Ribsml_uS5_D2-typ_fold_subgr"/>
</dbReference>
<dbReference type="NCBIfam" id="TIGR01021">
    <property type="entry name" value="rpsE_bact"/>
    <property type="match status" value="1"/>
</dbReference>
<dbReference type="PANTHER" id="PTHR48277">
    <property type="entry name" value="MITOCHONDRIAL RIBOSOMAL PROTEIN S5"/>
    <property type="match status" value="1"/>
</dbReference>
<dbReference type="PANTHER" id="PTHR48277:SF1">
    <property type="entry name" value="MITOCHONDRIAL RIBOSOMAL PROTEIN S5"/>
    <property type="match status" value="1"/>
</dbReference>
<dbReference type="Pfam" id="PF00333">
    <property type="entry name" value="Ribosomal_S5"/>
    <property type="match status" value="1"/>
</dbReference>
<dbReference type="Pfam" id="PF03719">
    <property type="entry name" value="Ribosomal_S5_C"/>
    <property type="match status" value="1"/>
</dbReference>
<dbReference type="SUPFAM" id="SSF54768">
    <property type="entry name" value="dsRNA-binding domain-like"/>
    <property type="match status" value="1"/>
</dbReference>
<dbReference type="SUPFAM" id="SSF54211">
    <property type="entry name" value="Ribosomal protein S5 domain 2-like"/>
    <property type="match status" value="1"/>
</dbReference>
<dbReference type="PROSITE" id="PS00585">
    <property type="entry name" value="RIBOSOMAL_S5"/>
    <property type="match status" value="1"/>
</dbReference>
<dbReference type="PROSITE" id="PS50881">
    <property type="entry name" value="S5_DSRBD"/>
    <property type="match status" value="1"/>
</dbReference>
<proteinExistence type="inferred from homology"/>
<reference key="1">
    <citation type="journal article" date="2007" name="Proc. Natl. Acad. Sci. U.S.A.">
        <title>Genome plasticity of BCG and impact on vaccine efficacy.</title>
        <authorList>
            <person name="Brosch R."/>
            <person name="Gordon S.V."/>
            <person name="Garnier T."/>
            <person name="Eiglmeier K."/>
            <person name="Frigui W."/>
            <person name="Valenti P."/>
            <person name="Dos Santos S."/>
            <person name="Duthoy S."/>
            <person name="Lacroix C."/>
            <person name="Garcia-Pelayo C."/>
            <person name="Inwald J.K."/>
            <person name="Golby P."/>
            <person name="Garcia J.N."/>
            <person name="Hewinson R.G."/>
            <person name="Behr M.A."/>
            <person name="Quail M.A."/>
            <person name="Churcher C."/>
            <person name="Barrell B.G."/>
            <person name="Parkhill J."/>
            <person name="Cole S.T."/>
        </authorList>
    </citation>
    <scope>NUCLEOTIDE SEQUENCE [LARGE SCALE GENOMIC DNA]</scope>
    <source>
        <strain>BCG / Pasteur 1173P2</strain>
    </source>
</reference>
<accession>A1KGK2</accession>
<comment type="function">
    <text evidence="1">With S4 and S12 plays an important role in translational accuracy.</text>
</comment>
<comment type="function">
    <text evidence="1">Located at the back of the 30S subunit body where it stabilizes the conformation of the head with respect to the body.</text>
</comment>
<comment type="subunit">
    <text evidence="1">Part of the 30S ribosomal subunit. Contacts proteins S4 and S8.</text>
</comment>
<comment type="domain">
    <text>The N-terminal domain interacts with the head of the 30S subunit; the C-terminal domain interacts with the body and contacts protein S4. The interaction surface between S4 and S5 is involved in control of translational fidelity.</text>
</comment>
<comment type="similarity">
    <text evidence="1">Belongs to the universal ribosomal protein uS5 family.</text>
</comment>
<name>RS5_MYCBP</name>
<protein>
    <recommendedName>
        <fullName evidence="1">Small ribosomal subunit protein uS5</fullName>
    </recommendedName>
    <alternativeName>
        <fullName evidence="3">30S ribosomal protein S5</fullName>
    </alternativeName>
</protein>
<gene>
    <name evidence="1" type="primary">rpsE</name>
    <name type="ordered locus">BCG_0771</name>
</gene>
<sequence length="220" mass="22888">MAEQPAGQAGTTDNRDARGDREGRRRDSGRGSRERDGEKSNYLERVVAINRVSKVVKGGRRFSFTALVIVGDGNGMVGVGYGKAKEVPAAIAKGVEEARKSFFRVPLIGGTITHPVQGEAAAGVVLLRPASPGTGVIAGGAARAVLECAGVHDILAKSLGSDNAINVVHATVAALKLLQRPEEVAARRGLPIEDVAPAGMLKARRKSEALAASVLPDRTI</sequence>
<organism>
    <name type="scientific">Mycobacterium bovis (strain BCG / Pasteur 1173P2)</name>
    <dbReference type="NCBI Taxonomy" id="410289"/>
    <lineage>
        <taxon>Bacteria</taxon>
        <taxon>Bacillati</taxon>
        <taxon>Actinomycetota</taxon>
        <taxon>Actinomycetes</taxon>
        <taxon>Mycobacteriales</taxon>
        <taxon>Mycobacteriaceae</taxon>
        <taxon>Mycobacterium</taxon>
        <taxon>Mycobacterium tuberculosis complex</taxon>
    </lineage>
</organism>
<evidence type="ECO:0000255" key="1">
    <source>
        <dbReference type="HAMAP-Rule" id="MF_01307"/>
    </source>
</evidence>
<evidence type="ECO:0000256" key="2">
    <source>
        <dbReference type="SAM" id="MobiDB-lite"/>
    </source>
</evidence>
<evidence type="ECO:0000305" key="3"/>
<keyword id="KW-0687">Ribonucleoprotein</keyword>
<keyword id="KW-0689">Ribosomal protein</keyword>
<keyword id="KW-0694">RNA-binding</keyword>
<keyword id="KW-0699">rRNA-binding</keyword>